<gene>
    <name evidence="1" type="primary">ahcY</name>
    <name type="ordered locus">BR2097</name>
    <name type="ordered locus">BS1330_I2091</name>
</gene>
<accession>Q8FXZ7</accession>
<accession>G0K945</accession>
<proteinExistence type="inferred from homology"/>
<comment type="function">
    <text evidence="1">May play a key role in the regulation of the intracellular concentration of adenosylhomocysteine.</text>
</comment>
<comment type="catalytic activity">
    <reaction evidence="1">
        <text>S-adenosyl-L-homocysteine + H2O = L-homocysteine + adenosine</text>
        <dbReference type="Rhea" id="RHEA:21708"/>
        <dbReference type="ChEBI" id="CHEBI:15377"/>
        <dbReference type="ChEBI" id="CHEBI:16335"/>
        <dbReference type="ChEBI" id="CHEBI:57856"/>
        <dbReference type="ChEBI" id="CHEBI:58199"/>
        <dbReference type="EC" id="3.13.2.1"/>
    </reaction>
</comment>
<comment type="cofactor">
    <cofactor evidence="1">
        <name>NAD(+)</name>
        <dbReference type="ChEBI" id="CHEBI:57540"/>
    </cofactor>
    <text evidence="1">Binds 1 NAD(+) per subunit.</text>
</comment>
<comment type="pathway">
    <text evidence="1">Amino-acid biosynthesis; L-homocysteine biosynthesis; L-homocysteine from S-adenosyl-L-homocysteine: step 1/1.</text>
</comment>
<comment type="subcellular location">
    <subcellularLocation>
        <location evidence="1">Cytoplasm</location>
    </subcellularLocation>
</comment>
<comment type="similarity">
    <text evidence="1">Belongs to the adenosylhomocysteinase family.</text>
</comment>
<organism>
    <name type="scientific">Brucella suis biovar 1 (strain 1330)</name>
    <dbReference type="NCBI Taxonomy" id="204722"/>
    <lineage>
        <taxon>Bacteria</taxon>
        <taxon>Pseudomonadati</taxon>
        <taxon>Pseudomonadota</taxon>
        <taxon>Alphaproteobacteria</taxon>
        <taxon>Hyphomicrobiales</taxon>
        <taxon>Brucellaceae</taxon>
        <taxon>Brucella/Ochrobactrum group</taxon>
        <taxon>Brucella</taxon>
    </lineage>
</organism>
<evidence type="ECO:0000255" key="1">
    <source>
        <dbReference type="HAMAP-Rule" id="MF_00563"/>
    </source>
</evidence>
<keyword id="KW-0963">Cytoplasm</keyword>
<keyword id="KW-0378">Hydrolase</keyword>
<keyword id="KW-0520">NAD</keyword>
<keyword id="KW-0554">One-carbon metabolism</keyword>
<feature type="chain" id="PRO_0000116952" description="Adenosylhomocysteinase">
    <location>
        <begin position="1"/>
        <end position="466"/>
    </location>
</feature>
<feature type="binding site" evidence="1">
    <location>
        <position position="57"/>
    </location>
    <ligand>
        <name>substrate</name>
    </ligand>
</feature>
<feature type="binding site" evidence="1">
    <location>
        <position position="132"/>
    </location>
    <ligand>
        <name>substrate</name>
    </ligand>
</feature>
<feature type="binding site" evidence="1">
    <location>
        <position position="192"/>
    </location>
    <ligand>
        <name>substrate</name>
    </ligand>
</feature>
<feature type="binding site" evidence="1">
    <location>
        <begin position="193"/>
        <end position="195"/>
    </location>
    <ligand>
        <name>NAD(+)</name>
        <dbReference type="ChEBI" id="CHEBI:57540"/>
    </ligand>
</feature>
<feature type="binding site" evidence="1">
    <location>
        <position position="222"/>
    </location>
    <ligand>
        <name>substrate</name>
    </ligand>
</feature>
<feature type="binding site" evidence="1">
    <location>
        <position position="226"/>
    </location>
    <ligand>
        <name>substrate</name>
    </ligand>
</feature>
<feature type="binding site" evidence="1">
    <location>
        <position position="227"/>
    </location>
    <ligand>
        <name>NAD(+)</name>
        <dbReference type="ChEBI" id="CHEBI:57540"/>
    </ligand>
</feature>
<feature type="binding site" evidence="1">
    <location>
        <begin position="256"/>
        <end position="261"/>
    </location>
    <ligand>
        <name>NAD(+)</name>
        <dbReference type="ChEBI" id="CHEBI:57540"/>
    </ligand>
</feature>
<feature type="binding site" evidence="1">
    <location>
        <position position="279"/>
    </location>
    <ligand>
        <name>NAD(+)</name>
        <dbReference type="ChEBI" id="CHEBI:57540"/>
    </ligand>
</feature>
<feature type="binding site" evidence="1">
    <location>
        <position position="314"/>
    </location>
    <ligand>
        <name>NAD(+)</name>
        <dbReference type="ChEBI" id="CHEBI:57540"/>
    </ligand>
</feature>
<feature type="binding site" evidence="1">
    <location>
        <begin position="335"/>
        <end position="337"/>
    </location>
    <ligand>
        <name>NAD(+)</name>
        <dbReference type="ChEBI" id="CHEBI:57540"/>
    </ligand>
</feature>
<feature type="binding site" evidence="1">
    <location>
        <position position="380"/>
    </location>
    <ligand>
        <name>NAD(+)</name>
        <dbReference type="ChEBI" id="CHEBI:57540"/>
    </ligand>
</feature>
<reference key="1">
    <citation type="journal article" date="2002" name="Proc. Natl. Acad. Sci. U.S.A.">
        <title>The Brucella suis genome reveals fundamental similarities between animal and plant pathogens and symbionts.</title>
        <authorList>
            <person name="Paulsen I.T."/>
            <person name="Seshadri R."/>
            <person name="Nelson K.E."/>
            <person name="Eisen J.A."/>
            <person name="Heidelberg J.F."/>
            <person name="Read T.D."/>
            <person name="Dodson R.J."/>
            <person name="Umayam L.A."/>
            <person name="Brinkac L.M."/>
            <person name="Beanan M.J."/>
            <person name="Daugherty S.C."/>
            <person name="DeBoy R.T."/>
            <person name="Durkin A.S."/>
            <person name="Kolonay J.F."/>
            <person name="Madupu R."/>
            <person name="Nelson W.C."/>
            <person name="Ayodeji B."/>
            <person name="Kraul M."/>
            <person name="Shetty J."/>
            <person name="Malek J.A."/>
            <person name="Van Aken S.E."/>
            <person name="Riedmuller S."/>
            <person name="Tettelin H."/>
            <person name="Gill S.R."/>
            <person name="White O."/>
            <person name="Salzberg S.L."/>
            <person name="Hoover D.L."/>
            <person name="Lindler L.E."/>
            <person name="Halling S.M."/>
            <person name="Boyle S.M."/>
            <person name="Fraser C.M."/>
        </authorList>
    </citation>
    <scope>NUCLEOTIDE SEQUENCE [LARGE SCALE GENOMIC DNA]</scope>
    <source>
        <strain>1330</strain>
    </source>
</reference>
<reference key="2">
    <citation type="journal article" date="2011" name="J. Bacteriol.">
        <title>Revised genome sequence of Brucella suis 1330.</title>
        <authorList>
            <person name="Tae H."/>
            <person name="Shallom S."/>
            <person name="Settlage R."/>
            <person name="Preston D."/>
            <person name="Adams L.G."/>
            <person name="Garner H.R."/>
        </authorList>
    </citation>
    <scope>NUCLEOTIDE SEQUENCE [LARGE SCALE GENOMIC DNA]</scope>
    <source>
        <strain>1330</strain>
    </source>
</reference>
<protein>
    <recommendedName>
        <fullName evidence="1">Adenosylhomocysteinase</fullName>
        <ecNumber evidence="1">3.13.2.1</ecNumber>
    </recommendedName>
    <alternativeName>
        <fullName evidence="1">S-adenosyl-L-homocysteine hydrolase</fullName>
        <shortName evidence="1">AdoHcyase</shortName>
    </alternativeName>
</protein>
<dbReference type="EC" id="3.13.2.1" evidence="1"/>
<dbReference type="EMBL" id="AE014291">
    <property type="protein sequence ID" value="AAN30987.1"/>
    <property type="molecule type" value="Genomic_DNA"/>
</dbReference>
<dbReference type="EMBL" id="CP002997">
    <property type="protein sequence ID" value="AEM19404.1"/>
    <property type="molecule type" value="Genomic_DNA"/>
</dbReference>
<dbReference type="RefSeq" id="WP_002965162.1">
    <property type="nucleotide sequence ID" value="NZ_KN046804.1"/>
</dbReference>
<dbReference type="SMR" id="Q8FXZ7"/>
<dbReference type="GeneID" id="97534642"/>
<dbReference type="KEGG" id="bms:BR2097"/>
<dbReference type="KEGG" id="bsi:BS1330_I2091"/>
<dbReference type="PATRIC" id="fig|204722.21.peg.1308"/>
<dbReference type="HOGENOM" id="CLU_025194_2_0_5"/>
<dbReference type="PhylomeDB" id="Q8FXZ7"/>
<dbReference type="UniPathway" id="UPA00314">
    <property type="reaction ID" value="UER00076"/>
</dbReference>
<dbReference type="Proteomes" id="UP000007104">
    <property type="component" value="Chromosome I"/>
</dbReference>
<dbReference type="GO" id="GO:0005829">
    <property type="term" value="C:cytosol"/>
    <property type="evidence" value="ECO:0007669"/>
    <property type="project" value="TreeGrafter"/>
</dbReference>
<dbReference type="GO" id="GO:0004013">
    <property type="term" value="F:adenosylhomocysteinase activity"/>
    <property type="evidence" value="ECO:0007669"/>
    <property type="project" value="UniProtKB-UniRule"/>
</dbReference>
<dbReference type="GO" id="GO:0071269">
    <property type="term" value="P:L-homocysteine biosynthetic process"/>
    <property type="evidence" value="ECO:0007669"/>
    <property type="project" value="UniProtKB-UniRule"/>
</dbReference>
<dbReference type="GO" id="GO:0006730">
    <property type="term" value="P:one-carbon metabolic process"/>
    <property type="evidence" value="ECO:0007669"/>
    <property type="project" value="UniProtKB-KW"/>
</dbReference>
<dbReference type="GO" id="GO:0033353">
    <property type="term" value="P:S-adenosylmethionine cycle"/>
    <property type="evidence" value="ECO:0007669"/>
    <property type="project" value="TreeGrafter"/>
</dbReference>
<dbReference type="CDD" id="cd00401">
    <property type="entry name" value="SAHH"/>
    <property type="match status" value="1"/>
</dbReference>
<dbReference type="FunFam" id="3.40.50.720:FF:000004">
    <property type="entry name" value="Adenosylhomocysteinase"/>
    <property type="match status" value="1"/>
</dbReference>
<dbReference type="Gene3D" id="3.40.50.1480">
    <property type="entry name" value="Adenosylhomocysteinase-like"/>
    <property type="match status" value="1"/>
</dbReference>
<dbReference type="Gene3D" id="3.40.50.720">
    <property type="entry name" value="NAD(P)-binding Rossmann-like Domain"/>
    <property type="match status" value="1"/>
</dbReference>
<dbReference type="HAMAP" id="MF_00563">
    <property type="entry name" value="AdoHcyase"/>
    <property type="match status" value="1"/>
</dbReference>
<dbReference type="InterPro" id="IPR042172">
    <property type="entry name" value="Adenosylhomocyst_ase-like_sf"/>
</dbReference>
<dbReference type="InterPro" id="IPR000043">
    <property type="entry name" value="Adenosylhomocysteinase-like"/>
</dbReference>
<dbReference type="InterPro" id="IPR015878">
    <property type="entry name" value="Ado_hCys_hydrolase_NAD-bd"/>
</dbReference>
<dbReference type="InterPro" id="IPR036291">
    <property type="entry name" value="NAD(P)-bd_dom_sf"/>
</dbReference>
<dbReference type="InterPro" id="IPR020082">
    <property type="entry name" value="S-Ado-L-homoCys_hydrolase_CS"/>
</dbReference>
<dbReference type="NCBIfam" id="TIGR00936">
    <property type="entry name" value="ahcY"/>
    <property type="match status" value="1"/>
</dbReference>
<dbReference type="NCBIfam" id="NF004005">
    <property type="entry name" value="PRK05476.2-3"/>
    <property type="match status" value="1"/>
</dbReference>
<dbReference type="PANTHER" id="PTHR23420">
    <property type="entry name" value="ADENOSYLHOMOCYSTEINASE"/>
    <property type="match status" value="1"/>
</dbReference>
<dbReference type="PANTHER" id="PTHR23420:SF0">
    <property type="entry name" value="ADENOSYLHOMOCYSTEINASE"/>
    <property type="match status" value="1"/>
</dbReference>
<dbReference type="Pfam" id="PF05221">
    <property type="entry name" value="AdoHcyase"/>
    <property type="match status" value="1"/>
</dbReference>
<dbReference type="Pfam" id="PF00670">
    <property type="entry name" value="AdoHcyase_NAD"/>
    <property type="match status" value="1"/>
</dbReference>
<dbReference type="PIRSF" id="PIRSF001109">
    <property type="entry name" value="Ad_hcy_hydrolase"/>
    <property type="match status" value="1"/>
</dbReference>
<dbReference type="SMART" id="SM00996">
    <property type="entry name" value="AdoHcyase"/>
    <property type="match status" value="1"/>
</dbReference>
<dbReference type="SMART" id="SM00997">
    <property type="entry name" value="AdoHcyase_NAD"/>
    <property type="match status" value="1"/>
</dbReference>
<dbReference type="SUPFAM" id="SSF52283">
    <property type="entry name" value="Formate/glycerate dehydrogenase catalytic domain-like"/>
    <property type="match status" value="1"/>
</dbReference>
<dbReference type="SUPFAM" id="SSF51735">
    <property type="entry name" value="NAD(P)-binding Rossmann-fold domains"/>
    <property type="match status" value="1"/>
</dbReference>
<dbReference type="PROSITE" id="PS00738">
    <property type="entry name" value="ADOHCYASE_1"/>
    <property type="match status" value="1"/>
</dbReference>
<dbReference type="PROSITE" id="PS00739">
    <property type="entry name" value="ADOHCYASE_2"/>
    <property type="match status" value="1"/>
</dbReference>
<name>SAHH_BRUSU</name>
<sequence>MTASQDFVVKDISLADWGRKELDIAETEMPGLMAAREEFGKSQPLKGARISGSLHMTIQTAVLIETLKVLGAEVRWASCNIFSTQDHAAAAIAATGTPVFAVKGETLEEYWTYTDQIFQWPDGEPSNMILDDGGDATMYILIGARAEAGEDVLSNPQSEEEEVLFAQIKKRMAATPGFFTKQRAAIKGVTEETTTGVNRLYQLQKKGLLPFPAINVNDSVTKSKFDNKYGCKESLVDGIRRGTDVMMAGKVAVVCGYGDVGKGSAQSLAGAGARVKVTEVDPICALQAAMDGFEVVTLDDAASTADIVVTTTGNKDVITIDHMRKMKDMCIVGNIGHFDNEIQVAALRNLKWTNVKPQVDLIEFPDGKRLILLSEGRLLNLGNATGHPSFVMSASFTNQVLGQIELFTRTDAYKNEVYVLPKHLDEKVARLHLDKLGAKLTVLSEEQAAYIGVTPQGPFKSEHYRY</sequence>